<feature type="chain" id="PRO_0000282255" description="UPF0060 membrane protein Rmet_4032">
    <location>
        <begin position="1"/>
        <end position="105"/>
    </location>
</feature>
<feature type="transmembrane region" description="Helical" evidence="1">
    <location>
        <begin position="4"/>
        <end position="24"/>
    </location>
</feature>
<feature type="transmembrane region" description="Helical" evidence="1">
    <location>
        <begin position="28"/>
        <end position="48"/>
    </location>
</feature>
<feature type="transmembrane region" description="Helical" evidence="1">
    <location>
        <begin position="60"/>
        <end position="80"/>
    </location>
</feature>
<feature type="transmembrane region" description="Helical" evidence="1">
    <location>
        <begin position="82"/>
        <end position="102"/>
    </location>
</feature>
<geneLocation type="plasmid">
    <name>megaplasmid CH34</name>
</geneLocation>
<keyword id="KW-0997">Cell inner membrane</keyword>
<keyword id="KW-1003">Cell membrane</keyword>
<keyword id="KW-0472">Membrane</keyword>
<keyword id="KW-0614">Plasmid</keyword>
<keyword id="KW-1185">Reference proteome</keyword>
<keyword id="KW-0812">Transmembrane</keyword>
<keyword id="KW-1133">Transmembrane helix</keyword>
<reference key="1">
    <citation type="journal article" date="2010" name="PLoS ONE">
        <title>The complete genome sequence of Cupriavidus metallidurans strain CH34, a master survivalist in harsh and anthropogenic environments.</title>
        <authorList>
            <person name="Janssen P.J."/>
            <person name="Van Houdt R."/>
            <person name="Moors H."/>
            <person name="Monsieurs P."/>
            <person name="Morin N."/>
            <person name="Michaux A."/>
            <person name="Benotmane M.A."/>
            <person name="Leys N."/>
            <person name="Vallaeys T."/>
            <person name="Lapidus A."/>
            <person name="Monchy S."/>
            <person name="Medigue C."/>
            <person name="Taghavi S."/>
            <person name="McCorkle S."/>
            <person name="Dunn J."/>
            <person name="van der Lelie D."/>
            <person name="Mergeay M."/>
        </authorList>
    </citation>
    <scope>NUCLEOTIDE SEQUENCE [LARGE SCALE GENOMIC DNA]</scope>
    <source>
        <strain>ATCC 43123 / DSM 2839 / NBRC 102507 / CH34</strain>
    </source>
</reference>
<dbReference type="EMBL" id="CP000353">
    <property type="protein sequence ID" value="ABF10900.1"/>
    <property type="molecule type" value="Genomic_DNA"/>
</dbReference>
<dbReference type="RefSeq" id="WP_011518539.1">
    <property type="nucleotide sequence ID" value="NC_007974.2"/>
</dbReference>
<dbReference type="SMR" id="Q1LG26"/>
<dbReference type="DNASU" id="4040890"/>
<dbReference type="KEGG" id="rme:Rmet_4032"/>
<dbReference type="eggNOG" id="COG1742">
    <property type="taxonomic scope" value="Bacteria"/>
</dbReference>
<dbReference type="HOGENOM" id="CLU_117653_2_0_4"/>
<dbReference type="Proteomes" id="UP000002429">
    <property type="component" value="Plasmid megaplasmid CH34"/>
</dbReference>
<dbReference type="GO" id="GO:0005886">
    <property type="term" value="C:plasma membrane"/>
    <property type="evidence" value="ECO:0007669"/>
    <property type="project" value="UniProtKB-SubCell"/>
</dbReference>
<dbReference type="HAMAP" id="MF_00010">
    <property type="entry name" value="UPF0060"/>
    <property type="match status" value="1"/>
</dbReference>
<dbReference type="InterPro" id="IPR003844">
    <property type="entry name" value="UPF0060"/>
</dbReference>
<dbReference type="NCBIfam" id="NF002586">
    <property type="entry name" value="PRK02237.1"/>
    <property type="match status" value="1"/>
</dbReference>
<dbReference type="PANTHER" id="PTHR36116">
    <property type="entry name" value="UPF0060 MEMBRANE PROTEIN YNFA"/>
    <property type="match status" value="1"/>
</dbReference>
<dbReference type="PANTHER" id="PTHR36116:SF1">
    <property type="entry name" value="UPF0060 MEMBRANE PROTEIN YNFA"/>
    <property type="match status" value="1"/>
</dbReference>
<dbReference type="Pfam" id="PF02694">
    <property type="entry name" value="UPF0060"/>
    <property type="match status" value="1"/>
</dbReference>
<dbReference type="SUPFAM" id="SSF103481">
    <property type="entry name" value="Multidrug resistance efflux transporter EmrE"/>
    <property type="match status" value="1"/>
</dbReference>
<accession>Q1LG26</accession>
<comment type="subcellular location">
    <subcellularLocation>
        <location evidence="1">Cell inner membrane</location>
        <topology evidence="1">Multi-pass membrane protein</topology>
    </subcellularLocation>
</comment>
<comment type="similarity">
    <text evidence="1">Belongs to the UPF0060 family.</text>
</comment>
<sequence length="105" mass="11245">MKTVGLYLLTALAEILGCYLPYLWLRQGASPWVLLPGAASLAVFAWLLTLHPDASGRVYAAYGGVYIAMAIAWLWAVDGVRPSPWDIAGVAVALGGMAIIVFQPR</sequence>
<proteinExistence type="inferred from homology"/>
<organism>
    <name type="scientific">Cupriavidus metallidurans (strain ATCC 43123 / DSM 2839 / NBRC 102507 / CH34)</name>
    <name type="common">Ralstonia metallidurans</name>
    <dbReference type="NCBI Taxonomy" id="266264"/>
    <lineage>
        <taxon>Bacteria</taxon>
        <taxon>Pseudomonadati</taxon>
        <taxon>Pseudomonadota</taxon>
        <taxon>Betaproteobacteria</taxon>
        <taxon>Burkholderiales</taxon>
        <taxon>Burkholderiaceae</taxon>
        <taxon>Cupriavidus</taxon>
    </lineage>
</organism>
<name>Y4032_CUPMC</name>
<evidence type="ECO:0000255" key="1">
    <source>
        <dbReference type="HAMAP-Rule" id="MF_00010"/>
    </source>
</evidence>
<gene>
    <name type="ordered locus">Rmet_4032</name>
</gene>
<protein>
    <recommendedName>
        <fullName evidence="1">UPF0060 membrane protein Rmet_4032</fullName>
    </recommendedName>
</protein>